<protein>
    <recommendedName>
        <fullName evidence="1">Carbamoyl phosphate synthase small chain</fullName>
        <ecNumber evidence="1">6.3.5.5</ecNumber>
    </recommendedName>
    <alternativeName>
        <fullName evidence="1">Carbamoyl phosphate synthetase glutamine chain</fullName>
    </alternativeName>
</protein>
<proteinExistence type="inferred from homology"/>
<dbReference type="EC" id="6.3.5.5" evidence="1"/>
<dbReference type="EMBL" id="AM774415">
    <property type="protein sequence ID" value="CAP14320.1"/>
    <property type="molecule type" value="Genomic_DNA"/>
</dbReference>
<dbReference type="RefSeq" id="WP_010903326.1">
    <property type="nucleotide sequence ID" value="NC_010364.1"/>
</dbReference>
<dbReference type="SMR" id="B0R6F1"/>
<dbReference type="EnsemblBacteria" id="CAP14320">
    <property type="protein sequence ID" value="CAP14320"/>
    <property type="gene ID" value="OE_3556R"/>
</dbReference>
<dbReference type="GeneID" id="89350037"/>
<dbReference type="KEGG" id="hsl:OE_3556R"/>
<dbReference type="HOGENOM" id="CLU_035901_2_1_2"/>
<dbReference type="PhylomeDB" id="B0R6F1"/>
<dbReference type="UniPathway" id="UPA00068">
    <property type="reaction ID" value="UER00171"/>
</dbReference>
<dbReference type="UniPathway" id="UPA00070">
    <property type="reaction ID" value="UER00115"/>
</dbReference>
<dbReference type="Proteomes" id="UP000001321">
    <property type="component" value="Chromosome"/>
</dbReference>
<dbReference type="GO" id="GO:0005524">
    <property type="term" value="F:ATP binding"/>
    <property type="evidence" value="ECO:0007669"/>
    <property type="project" value="UniProtKB-UniRule"/>
</dbReference>
<dbReference type="GO" id="GO:0004088">
    <property type="term" value="F:carbamoyl-phosphate synthase (glutamine-hydrolyzing) activity"/>
    <property type="evidence" value="ECO:0007669"/>
    <property type="project" value="UniProtKB-UniRule"/>
</dbReference>
<dbReference type="GO" id="GO:0004359">
    <property type="term" value="F:glutaminase activity"/>
    <property type="evidence" value="ECO:0007669"/>
    <property type="project" value="RHEA"/>
</dbReference>
<dbReference type="GO" id="GO:0006207">
    <property type="term" value="P:'de novo' pyrimidine nucleobase biosynthetic process"/>
    <property type="evidence" value="ECO:0007669"/>
    <property type="project" value="InterPro"/>
</dbReference>
<dbReference type="GO" id="GO:0044205">
    <property type="term" value="P:'de novo' UMP biosynthetic process"/>
    <property type="evidence" value="ECO:0007669"/>
    <property type="project" value="UniProtKB-UniRule"/>
</dbReference>
<dbReference type="GO" id="GO:0006541">
    <property type="term" value="P:glutamine metabolic process"/>
    <property type="evidence" value="ECO:0007669"/>
    <property type="project" value="InterPro"/>
</dbReference>
<dbReference type="GO" id="GO:0006526">
    <property type="term" value="P:L-arginine biosynthetic process"/>
    <property type="evidence" value="ECO:0007669"/>
    <property type="project" value="UniProtKB-UniRule"/>
</dbReference>
<dbReference type="CDD" id="cd01744">
    <property type="entry name" value="GATase1_CPSase"/>
    <property type="match status" value="1"/>
</dbReference>
<dbReference type="FunFam" id="3.50.30.20:FF:000010">
    <property type="entry name" value="Carbamoyl-phosphate synthase small chain"/>
    <property type="match status" value="1"/>
</dbReference>
<dbReference type="Gene3D" id="3.40.50.880">
    <property type="match status" value="1"/>
</dbReference>
<dbReference type="Gene3D" id="3.50.30.20">
    <property type="entry name" value="Carbamoyl-phosphate synthase small subunit, N-terminal domain"/>
    <property type="match status" value="1"/>
</dbReference>
<dbReference type="HAMAP" id="MF_01209">
    <property type="entry name" value="CPSase_S_chain"/>
    <property type="match status" value="1"/>
</dbReference>
<dbReference type="InterPro" id="IPR050472">
    <property type="entry name" value="Anth_synth/Amidotransfase"/>
</dbReference>
<dbReference type="InterPro" id="IPR006274">
    <property type="entry name" value="CarbamoylP_synth_ssu"/>
</dbReference>
<dbReference type="InterPro" id="IPR002474">
    <property type="entry name" value="CarbamoylP_synth_ssu_N"/>
</dbReference>
<dbReference type="InterPro" id="IPR036480">
    <property type="entry name" value="CarbP_synth_ssu_N_sf"/>
</dbReference>
<dbReference type="InterPro" id="IPR029062">
    <property type="entry name" value="Class_I_gatase-like"/>
</dbReference>
<dbReference type="InterPro" id="IPR035686">
    <property type="entry name" value="CPSase_GATase1"/>
</dbReference>
<dbReference type="InterPro" id="IPR017926">
    <property type="entry name" value="GATASE"/>
</dbReference>
<dbReference type="NCBIfam" id="TIGR01368">
    <property type="entry name" value="CPSaseIIsmall"/>
    <property type="match status" value="1"/>
</dbReference>
<dbReference type="NCBIfam" id="NF009475">
    <property type="entry name" value="PRK12838.1"/>
    <property type="match status" value="1"/>
</dbReference>
<dbReference type="PANTHER" id="PTHR43418:SF7">
    <property type="entry name" value="CARBAMOYL-PHOSPHATE SYNTHASE SMALL CHAIN"/>
    <property type="match status" value="1"/>
</dbReference>
<dbReference type="PANTHER" id="PTHR43418">
    <property type="entry name" value="MULTIFUNCTIONAL TRYPTOPHAN BIOSYNTHESIS PROTEIN-RELATED"/>
    <property type="match status" value="1"/>
</dbReference>
<dbReference type="Pfam" id="PF00988">
    <property type="entry name" value="CPSase_sm_chain"/>
    <property type="match status" value="1"/>
</dbReference>
<dbReference type="Pfam" id="PF00117">
    <property type="entry name" value="GATase"/>
    <property type="match status" value="1"/>
</dbReference>
<dbReference type="PRINTS" id="PR00097">
    <property type="entry name" value="ANTSNTHASEII"/>
</dbReference>
<dbReference type="PRINTS" id="PR00099">
    <property type="entry name" value="CPSGATASE"/>
</dbReference>
<dbReference type="PRINTS" id="PR00096">
    <property type="entry name" value="GATASE"/>
</dbReference>
<dbReference type="SMART" id="SM01097">
    <property type="entry name" value="CPSase_sm_chain"/>
    <property type="match status" value="1"/>
</dbReference>
<dbReference type="SUPFAM" id="SSF52021">
    <property type="entry name" value="Carbamoyl phosphate synthetase, small subunit N-terminal domain"/>
    <property type="match status" value="1"/>
</dbReference>
<dbReference type="SUPFAM" id="SSF52317">
    <property type="entry name" value="Class I glutamine amidotransferase-like"/>
    <property type="match status" value="1"/>
</dbReference>
<dbReference type="PROSITE" id="PS51273">
    <property type="entry name" value="GATASE_TYPE_1"/>
    <property type="match status" value="1"/>
</dbReference>
<evidence type="ECO:0000255" key="1">
    <source>
        <dbReference type="HAMAP-Rule" id="MF_01209"/>
    </source>
</evidence>
<sequence length="353" mass="37197">MSDAYLALETGDVVEATARAPGMARGELVFTTAYTGYEESLTDPSYEAQVLTFAYPLIGNYGVRPERTESDRVHPSAVVARELTDDVADWLRTEGVPAVDGIDTRDLVLDIRDGGAMQVGIAAGPDASPATARAQLADCPRLSARTEIGAHVSVDTAETHGNGDTTVALVDCGAKRSIIDAFVARGATVHRLPYDATPADIAAVDPDLLFISNGPGDPANFDAAEHLVDEYIGTVPIAGICLGQQIVARALGGDTEKMDFGHRGVNQPVLDHDSGRVVMTTQNHGYTVADPGDLTVTQVNVNDGTPEALDSAPLDVLTRQYHPEANPGPHDTRGFFDDVLAMADASYTPATAD</sequence>
<gene>
    <name evidence="1" type="primary">carA</name>
    <name type="ordered locus">OE_3556R</name>
</gene>
<organism>
    <name type="scientific">Halobacterium salinarum (strain ATCC 29341 / DSM 671 / R1)</name>
    <dbReference type="NCBI Taxonomy" id="478009"/>
    <lineage>
        <taxon>Archaea</taxon>
        <taxon>Methanobacteriati</taxon>
        <taxon>Methanobacteriota</taxon>
        <taxon>Stenosarchaea group</taxon>
        <taxon>Halobacteria</taxon>
        <taxon>Halobacteriales</taxon>
        <taxon>Halobacteriaceae</taxon>
        <taxon>Halobacterium</taxon>
        <taxon>Halobacterium salinarum NRC-34001</taxon>
    </lineage>
</organism>
<comment type="function">
    <text evidence="1">Small subunit of the glutamine-dependent carbamoyl phosphate synthetase (CPSase). CPSase catalyzes the formation of carbamoyl phosphate from the ammonia moiety of glutamine, carbonate, and phosphate donated by ATP, constituting the first step of 2 biosynthetic pathways, one leading to arginine and/or urea and the other to pyrimidine nucleotides. The small subunit (glutamine amidotransferase) binds and cleaves glutamine to supply the large subunit with the substrate ammonia.</text>
</comment>
<comment type="catalytic activity">
    <reaction evidence="1">
        <text>hydrogencarbonate + L-glutamine + 2 ATP + H2O = carbamoyl phosphate + L-glutamate + 2 ADP + phosphate + 2 H(+)</text>
        <dbReference type="Rhea" id="RHEA:18633"/>
        <dbReference type="ChEBI" id="CHEBI:15377"/>
        <dbReference type="ChEBI" id="CHEBI:15378"/>
        <dbReference type="ChEBI" id="CHEBI:17544"/>
        <dbReference type="ChEBI" id="CHEBI:29985"/>
        <dbReference type="ChEBI" id="CHEBI:30616"/>
        <dbReference type="ChEBI" id="CHEBI:43474"/>
        <dbReference type="ChEBI" id="CHEBI:58228"/>
        <dbReference type="ChEBI" id="CHEBI:58359"/>
        <dbReference type="ChEBI" id="CHEBI:456216"/>
        <dbReference type="EC" id="6.3.5.5"/>
    </reaction>
</comment>
<comment type="catalytic activity">
    <molecule>Carbamoyl phosphate synthase small chain</molecule>
    <reaction evidence="1">
        <text>L-glutamine + H2O = L-glutamate + NH4(+)</text>
        <dbReference type="Rhea" id="RHEA:15889"/>
        <dbReference type="ChEBI" id="CHEBI:15377"/>
        <dbReference type="ChEBI" id="CHEBI:28938"/>
        <dbReference type="ChEBI" id="CHEBI:29985"/>
        <dbReference type="ChEBI" id="CHEBI:58359"/>
    </reaction>
</comment>
<comment type="pathway">
    <text evidence="1">Amino-acid biosynthesis; L-arginine biosynthesis; carbamoyl phosphate from bicarbonate: step 1/1.</text>
</comment>
<comment type="pathway">
    <text evidence="1">Pyrimidine metabolism; UMP biosynthesis via de novo pathway; (S)-dihydroorotate from bicarbonate: step 1/3.</text>
</comment>
<comment type="subunit">
    <text evidence="1">Composed of two chains; the small (or glutamine) chain promotes the hydrolysis of glutamine to ammonia, which is used by the large (or ammonia) chain to synthesize carbamoyl phosphate. Tetramer of heterodimers (alpha,beta)4.</text>
</comment>
<comment type="similarity">
    <text evidence="1">Belongs to the CarA family.</text>
</comment>
<keyword id="KW-0028">Amino-acid biosynthesis</keyword>
<keyword id="KW-0055">Arginine biosynthesis</keyword>
<keyword id="KW-0067">ATP-binding</keyword>
<keyword id="KW-0315">Glutamine amidotransferase</keyword>
<keyword id="KW-0436">Ligase</keyword>
<keyword id="KW-0547">Nucleotide-binding</keyword>
<keyword id="KW-0665">Pyrimidine biosynthesis</keyword>
<accession>B0R6F1</accession>
<reference key="1">
    <citation type="journal article" date="2008" name="Genomics">
        <title>Evolution in the laboratory: the genome of Halobacterium salinarum strain R1 compared to that of strain NRC-1.</title>
        <authorList>
            <person name="Pfeiffer F."/>
            <person name="Schuster S.C."/>
            <person name="Broicher A."/>
            <person name="Falb M."/>
            <person name="Palm P."/>
            <person name="Rodewald K."/>
            <person name="Ruepp A."/>
            <person name="Soppa J."/>
            <person name="Tittor J."/>
            <person name="Oesterhelt D."/>
        </authorList>
    </citation>
    <scope>NUCLEOTIDE SEQUENCE [LARGE SCALE GENOMIC DNA]</scope>
    <source>
        <strain>ATCC 29341 / DSM 671 / R1</strain>
    </source>
</reference>
<name>CARA_HALS3</name>
<feature type="chain" id="PRO_1000164699" description="Carbamoyl phosphate synthase small chain">
    <location>
        <begin position="1"/>
        <end position="353"/>
    </location>
</feature>
<feature type="domain" description="Glutamine amidotransferase type-1" evidence="1">
    <location>
        <begin position="166"/>
        <end position="349"/>
    </location>
</feature>
<feature type="region of interest" description="CPSase" evidence="1">
    <location>
        <begin position="1"/>
        <end position="166"/>
    </location>
</feature>
<feature type="active site" description="Nucleophile" evidence="1">
    <location>
        <position position="241"/>
    </location>
</feature>
<feature type="active site" evidence="1">
    <location>
        <position position="322"/>
    </location>
</feature>
<feature type="active site" evidence="1">
    <location>
        <position position="324"/>
    </location>
</feature>
<feature type="binding site" evidence="1">
    <location>
        <position position="45"/>
    </location>
    <ligand>
        <name>L-glutamine</name>
        <dbReference type="ChEBI" id="CHEBI:58359"/>
    </ligand>
</feature>
<feature type="binding site" evidence="1">
    <location>
        <position position="214"/>
    </location>
    <ligand>
        <name>L-glutamine</name>
        <dbReference type="ChEBI" id="CHEBI:58359"/>
    </ligand>
</feature>
<feature type="binding site" evidence="1">
    <location>
        <position position="216"/>
    </location>
    <ligand>
        <name>L-glutamine</name>
        <dbReference type="ChEBI" id="CHEBI:58359"/>
    </ligand>
</feature>
<feature type="binding site" evidence="1">
    <location>
        <position position="242"/>
    </location>
    <ligand>
        <name>L-glutamine</name>
        <dbReference type="ChEBI" id="CHEBI:58359"/>
    </ligand>
</feature>
<feature type="binding site" evidence="1">
    <location>
        <position position="245"/>
    </location>
    <ligand>
        <name>L-glutamine</name>
        <dbReference type="ChEBI" id="CHEBI:58359"/>
    </ligand>
</feature>
<feature type="binding site" evidence="1">
    <location>
        <position position="283"/>
    </location>
    <ligand>
        <name>L-glutamine</name>
        <dbReference type="ChEBI" id="CHEBI:58359"/>
    </ligand>
</feature>
<feature type="binding site" evidence="1">
    <location>
        <position position="285"/>
    </location>
    <ligand>
        <name>L-glutamine</name>
        <dbReference type="ChEBI" id="CHEBI:58359"/>
    </ligand>
</feature>
<feature type="binding site" evidence="1">
    <location>
        <position position="286"/>
    </location>
    <ligand>
        <name>L-glutamine</name>
        <dbReference type="ChEBI" id="CHEBI:58359"/>
    </ligand>
</feature>